<protein>
    <recommendedName>
        <fullName evidence="1">D-aminoacyl-tRNA deacylase</fullName>
        <ecNumber evidence="1">3.1.1.96</ecNumber>
    </recommendedName>
    <alternativeName>
        <fullName>D-tyrosyl-tRNA(Tyr) deacylase</fullName>
    </alternativeName>
</protein>
<organism>
    <name type="scientific">Thermococcus onnurineus (strain NA1)</name>
    <dbReference type="NCBI Taxonomy" id="523850"/>
    <lineage>
        <taxon>Archaea</taxon>
        <taxon>Methanobacteriati</taxon>
        <taxon>Methanobacteriota</taxon>
        <taxon>Thermococci</taxon>
        <taxon>Thermococcales</taxon>
        <taxon>Thermococcaceae</taxon>
        <taxon>Thermococcus</taxon>
    </lineage>
</organism>
<gene>
    <name evidence="1" type="primary">dtdA</name>
    <name type="ordered locus">TON_0175</name>
</gene>
<feature type="chain" id="PRO_1000129270" description="D-aminoacyl-tRNA deacylase">
    <location>
        <begin position="1"/>
        <end position="272"/>
    </location>
</feature>
<accession>B6YSX3</accession>
<comment type="function">
    <text evidence="1">D-aminoacyl-tRNA deacylase with broad substrate specificity. By recycling D-aminoacyl-tRNA to D-amino acids and free tRNA molecules, this enzyme counteracts the toxicity associated with the formation of D-aminoacyl-tRNA entities in vivo.</text>
</comment>
<comment type="catalytic activity">
    <reaction evidence="1">
        <text>a D-aminoacyl-tRNA + H2O = a tRNA + a D-alpha-amino acid + H(+)</text>
        <dbReference type="Rhea" id="RHEA:13953"/>
        <dbReference type="Rhea" id="RHEA-COMP:10123"/>
        <dbReference type="Rhea" id="RHEA-COMP:10124"/>
        <dbReference type="ChEBI" id="CHEBI:15377"/>
        <dbReference type="ChEBI" id="CHEBI:15378"/>
        <dbReference type="ChEBI" id="CHEBI:59871"/>
        <dbReference type="ChEBI" id="CHEBI:78442"/>
        <dbReference type="ChEBI" id="CHEBI:79333"/>
        <dbReference type="EC" id="3.1.1.96"/>
    </reaction>
</comment>
<comment type="catalytic activity">
    <reaction evidence="1">
        <text>glycyl-tRNA(Ala) + H2O = tRNA(Ala) + glycine + H(+)</text>
        <dbReference type="Rhea" id="RHEA:53744"/>
        <dbReference type="Rhea" id="RHEA-COMP:9657"/>
        <dbReference type="Rhea" id="RHEA-COMP:13640"/>
        <dbReference type="ChEBI" id="CHEBI:15377"/>
        <dbReference type="ChEBI" id="CHEBI:15378"/>
        <dbReference type="ChEBI" id="CHEBI:57305"/>
        <dbReference type="ChEBI" id="CHEBI:78442"/>
        <dbReference type="ChEBI" id="CHEBI:78522"/>
        <dbReference type="EC" id="3.1.1.96"/>
    </reaction>
</comment>
<comment type="cofactor">
    <cofactor evidence="1">
        <name>Zn(2+)</name>
        <dbReference type="ChEBI" id="CHEBI:29105"/>
    </cofactor>
    <text evidence="1">Binds 2 Zn(2+) ions per subunit.</text>
</comment>
<comment type="subunit">
    <text evidence="1">Monomer.</text>
</comment>
<comment type="similarity">
    <text evidence="1">Belongs to the DtdA deacylase family.</text>
</comment>
<name>DTDA_THEON</name>
<reference key="1">
    <citation type="journal article" date="2008" name="J. Bacteriol.">
        <title>The complete genome sequence of Thermococcus onnurineus NA1 reveals a mixed heterotrophic and carboxydotrophic metabolism.</title>
        <authorList>
            <person name="Lee H.S."/>
            <person name="Kang S.G."/>
            <person name="Bae S.S."/>
            <person name="Lim J.K."/>
            <person name="Cho Y."/>
            <person name="Kim Y.J."/>
            <person name="Jeon J.H."/>
            <person name="Cha S.-S."/>
            <person name="Kwon K.K."/>
            <person name="Kim H.-T."/>
            <person name="Park C.-J."/>
            <person name="Lee H.-W."/>
            <person name="Kim S.I."/>
            <person name="Chun J."/>
            <person name="Colwell R.R."/>
            <person name="Kim S.-J."/>
            <person name="Lee J.-H."/>
        </authorList>
    </citation>
    <scope>NUCLEOTIDE SEQUENCE [LARGE SCALE GENOMIC DNA]</scope>
    <source>
        <strain>NA1</strain>
    </source>
</reference>
<keyword id="KW-0378">Hydrolase</keyword>
<keyword id="KW-0479">Metal-binding</keyword>
<keyword id="KW-0862">Zinc</keyword>
<evidence type="ECO:0000255" key="1">
    <source>
        <dbReference type="HAMAP-Rule" id="MF_00562"/>
    </source>
</evidence>
<proteinExistence type="inferred from homology"/>
<sequence>MKVIMTTKTDLASMNIMEKLVENFGFKETDRLFDGNPVYSKGDTLILTTNDEMIYYDNLDKAIEHQLGLVPEIIVFASRHSSKQKLPALTTHITGNWGNAMYGGKDESLAIAQPSAMKLALLKMNELNDLNWIICYEATHHGPSELNVPSLFIEIGSSEEEWVNDRAGDILAETITYVLDKYRETKFPVAIGIGGGHYAPKQTKRALETDLAFSHIAPKYVHPLKKELILKAIERTAEKVDAIYVDWKGSKGETRQMAKALAEELGLEFIRD</sequence>
<dbReference type="EC" id="3.1.1.96" evidence="1"/>
<dbReference type="EMBL" id="CP000855">
    <property type="protein sequence ID" value="ACJ15660.1"/>
    <property type="molecule type" value="Genomic_DNA"/>
</dbReference>
<dbReference type="RefSeq" id="WP_012571133.1">
    <property type="nucleotide sequence ID" value="NC_011529.1"/>
</dbReference>
<dbReference type="SMR" id="B6YSX3"/>
<dbReference type="STRING" id="523850.TON_0175"/>
<dbReference type="GeneID" id="7017831"/>
<dbReference type="KEGG" id="ton:TON_0175"/>
<dbReference type="PATRIC" id="fig|523850.10.peg.175"/>
<dbReference type="eggNOG" id="arCOG01616">
    <property type="taxonomic scope" value="Archaea"/>
</dbReference>
<dbReference type="HOGENOM" id="CLU_056464_1_0_2"/>
<dbReference type="OrthoDB" id="9863at2157"/>
<dbReference type="Proteomes" id="UP000002727">
    <property type="component" value="Chromosome"/>
</dbReference>
<dbReference type="GO" id="GO:0051499">
    <property type="term" value="F:D-aminoacyl-tRNA deacylase activity"/>
    <property type="evidence" value="ECO:0007669"/>
    <property type="project" value="UniProtKB-UniRule"/>
</dbReference>
<dbReference type="GO" id="GO:0008270">
    <property type="term" value="F:zinc ion binding"/>
    <property type="evidence" value="ECO:0007669"/>
    <property type="project" value="UniProtKB-UniRule"/>
</dbReference>
<dbReference type="GO" id="GO:0019478">
    <property type="term" value="P:D-amino acid catabolic process"/>
    <property type="evidence" value="ECO:0007669"/>
    <property type="project" value="UniProtKB-UniRule"/>
</dbReference>
<dbReference type="FunFam" id="3.40.630.50:FF:000001">
    <property type="entry name" value="D-aminoacyl-tRNA deacylase"/>
    <property type="match status" value="1"/>
</dbReference>
<dbReference type="Gene3D" id="3.40.50.10700">
    <property type="entry name" value="AF0625-like"/>
    <property type="match status" value="1"/>
</dbReference>
<dbReference type="Gene3D" id="3.40.630.50">
    <property type="entry name" value="AF0625-like"/>
    <property type="match status" value="1"/>
</dbReference>
<dbReference type="HAMAP" id="MF_00562">
    <property type="entry name" value="Deacylase_DtdA"/>
    <property type="match status" value="1"/>
</dbReference>
<dbReference type="InterPro" id="IPR018033">
    <property type="entry name" value="Deacylase_DtdA_archaea"/>
</dbReference>
<dbReference type="InterPro" id="IPR007508">
    <property type="entry name" value="DtdA"/>
</dbReference>
<dbReference type="NCBIfam" id="NF003074">
    <property type="entry name" value="PRK03995.1-6"/>
    <property type="match status" value="1"/>
</dbReference>
<dbReference type="PANTHER" id="PTHR34667">
    <property type="entry name" value="D-AMINOACYL-TRNA DEACYLASE"/>
    <property type="match status" value="1"/>
</dbReference>
<dbReference type="PANTHER" id="PTHR34667:SF1">
    <property type="entry name" value="D-AMINOACYL-TRNA DEACYLASE"/>
    <property type="match status" value="1"/>
</dbReference>
<dbReference type="Pfam" id="PF04414">
    <property type="entry name" value="tRNA_deacylase"/>
    <property type="match status" value="1"/>
</dbReference>
<dbReference type="PIRSF" id="PIRSF016210">
    <property type="entry name" value="UCP016210"/>
    <property type="match status" value="1"/>
</dbReference>
<dbReference type="SUPFAM" id="SSF142535">
    <property type="entry name" value="AF0625-like"/>
    <property type="match status" value="1"/>
</dbReference>